<protein>
    <recommendedName>
        <fullName evidence="1">UPF0225 protein YchJ</fullName>
    </recommendedName>
</protein>
<evidence type="ECO:0000255" key="1">
    <source>
        <dbReference type="HAMAP-Rule" id="MF_00612"/>
    </source>
</evidence>
<dbReference type="EMBL" id="CU928164">
    <property type="protein sequence ID" value="CAR17700.1"/>
    <property type="molecule type" value="Genomic_DNA"/>
</dbReference>
<dbReference type="RefSeq" id="WP_001361954.1">
    <property type="nucleotide sequence ID" value="NC_011750.1"/>
</dbReference>
<dbReference type="RefSeq" id="YP_002407568.1">
    <property type="nucleotide sequence ID" value="NC_011750.1"/>
</dbReference>
<dbReference type="SMR" id="B7NVK2"/>
<dbReference type="STRING" id="585057.ECIAI39_1568"/>
<dbReference type="KEGG" id="ect:ECIAI39_1568"/>
<dbReference type="PATRIC" id="fig|585057.6.peg.1639"/>
<dbReference type="HOGENOM" id="CLU_099590_0_0_6"/>
<dbReference type="Proteomes" id="UP000000749">
    <property type="component" value="Chromosome"/>
</dbReference>
<dbReference type="Gene3D" id="3.10.450.50">
    <property type="match status" value="1"/>
</dbReference>
<dbReference type="HAMAP" id="MF_00612">
    <property type="entry name" value="UPF0225"/>
    <property type="match status" value="1"/>
</dbReference>
<dbReference type="InterPro" id="IPR032710">
    <property type="entry name" value="NTF2-like_dom_sf"/>
</dbReference>
<dbReference type="InterPro" id="IPR004027">
    <property type="entry name" value="SEC_C_motif"/>
</dbReference>
<dbReference type="InterPro" id="IPR023006">
    <property type="entry name" value="UPF0225"/>
</dbReference>
<dbReference type="InterPro" id="IPR048469">
    <property type="entry name" value="YchJ-like_M"/>
</dbReference>
<dbReference type="NCBIfam" id="NF002449">
    <property type="entry name" value="PRK01617.1"/>
    <property type="match status" value="1"/>
</dbReference>
<dbReference type="NCBIfam" id="NF002486">
    <property type="entry name" value="PRK01752.1"/>
    <property type="match status" value="1"/>
</dbReference>
<dbReference type="PANTHER" id="PTHR33747:SF1">
    <property type="entry name" value="ADENYLATE CYCLASE-ASSOCIATED CAP C-TERMINAL DOMAIN-CONTAINING PROTEIN"/>
    <property type="match status" value="1"/>
</dbReference>
<dbReference type="PANTHER" id="PTHR33747">
    <property type="entry name" value="UPF0225 PROTEIN SCO1677"/>
    <property type="match status" value="1"/>
</dbReference>
<dbReference type="Pfam" id="PF02810">
    <property type="entry name" value="SEC-C"/>
    <property type="match status" value="2"/>
</dbReference>
<dbReference type="Pfam" id="PF17775">
    <property type="entry name" value="YchJ_M-like"/>
    <property type="match status" value="1"/>
</dbReference>
<dbReference type="SUPFAM" id="SSF54427">
    <property type="entry name" value="NTF2-like"/>
    <property type="match status" value="1"/>
</dbReference>
<dbReference type="SUPFAM" id="SSF103642">
    <property type="entry name" value="Sec-C motif"/>
    <property type="match status" value="1"/>
</dbReference>
<gene>
    <name evidence="1" type="primary">ychJ</name>
    <name type="ordered locus">ECIAI39_1568</name>
</gene>
<name>YCHJ_ECO7I</name>
<organism>
    <name type="scientific">Escherichia coli O7:K1 (strain IAI39 / ExPEC)</name>
    <dbReference type="NCBI Taxonomy" id="585057"/>
    <lineage>
        <taxon>Bacteria</taxon>
        <taxon>Pseudomonadati</taxon>
        <taxon>Pseudomonadota</taxon>
        <taxon>Gammaproteobacteria</taxon>
        <taxon>Enterobacterales</taxon>
        <taxon>Enterobacteriaceae</taxon>
        <taxon>Escherichia</taxon>
    </lineage>
</organism>
<sequence>MSQLCPCGSAVEYSLCCHPYVSGEKVAPDPEHLMRSRYCAFVMKDADYLIKTWHPSCGAAALRAELMAGFAHTEWLGLTVFEHCWQDADNIGFVSFVARFTEGGKTGAIIERSRFLKENGQWYYIDGTRPQFGRNDPCPCGSGKKFKKCCGQ</sequence>
<proteinExistence type="inferred from homology"/>
<accession>B7NVK2</accession>
<comment type="similarity">
    <text evidence="1">Belongs to the UPF0225 family.</text>
</comment>
<feature type="chain" id="PRO_1000130380" description="UPF0225 protein YchJ">
    <location>
        <begin position="1"/>
        <end position="152"/>
    </location>
</feature>
<reference key="1">
    <citation type="journal article" date="2009" name="PLoS Genet.">
        <title>Organised genome dynamics in the Escherichia coli species results in highly diverse adaptive paths.</title>
        <authorList>
            <person name="Touchon M."/>
            <person name="Hoede C."/>
            <person name="Tenaillon O."/>
            <person name="Barbe V."/>
            <person name="Baeriswyl S."/>
            <person name="Bidet P."/>
            <person name="Bingen E."/>
            <person name="Bonacorsi S."/>
            <person name="Bouchier C."/>
            <person name="Bouvet O."/>
            <person name="Calteau A."/>
            <person name="Chiapello H."/>
            <person name="Clermont O."/>
            <person name="Cruveiller S."/>
            <person name="Danchin A."/>
            <person name="Diard M."/>
            <person name="Dossat C."/>
            <person name="Karoui M.E."/>
            <person name="Frapy E."/>
            <person name="Garry L."/>
            <person name="Ghigo J.M."/>
            <person name="Gilles A.M."/>
            <person name="Johnson J."/>
            <person name="Le Bouguenec C."/>
            <person name="Lescat M."/>
            <person name="Mangenot S."/>
            <person name="Martinez-Jehanne V."/>
            <person name="Matic I."/>
            <person name="Nassif X."/>
            <person name="Oztas S."/>
            <person name="Petit M.A."/>
            <person name="Pichon C."/>
            <person name="Rouy Z."/>
            <person name="Ruf C.S."/>
            <person name="Schneider D."/>
            <person name="Tourret J."/>
            <person name="Vacherie B."/>
            <person name="Vallenet D."/>
            <person name="Medigue C."/>
            <person name="Rocha E.P.C."/>
            <person name="Denamur E."/>
        </authorList>
    </citation>
    <scope>NUCLEOTIDE SEQUENCE [LARGE SCALE GENOMIC DNA]</scope>
    <source>
        <strain>IAI39 / ExPEC</strain>
    </source>
</reference>